<proteinExistence type="inferred from homology"/>
<reference key="1">
    <citation type="journal article" date="2002" name="Science">
        <title>50 million years of genomic stasis in endosymbiotic bacteria.</title>
        <authorList>
            <person name="Tamas I."/>
            <person name="Klasson L."/>
            <person name="Canbaeck B."/>
            <person name="Naeslund A.K."/>
            <person name="Eriksson A.-S."/>
            <person name="Wernegreen J.J."/>
            <person name="Sandstroem J.P."/>
            <person name="Moran N.A."/>
            <person name="Andersson S.G.E."/>
        </authorList>
    </citation>
    <scope>NUCLEOTIDE SEQUENCE [LARGE SCALE GENOMIC DNA]</scope>
    <source>
        <strain>Sg</strain>
    </source>
</reference>
<organism>
    <name type="scientific">Buchnera aphidicola subsp. Schizaphis graminum (strain Sg)</name>
    <dbReference type="NCBI Taxonomy" id="198804"/>
    <lineage>
        <taxon>Bacteria</taxon>
        <taxon>Pseudomonadati</taxon>
        <taxon>Pseudomonadota</taxon>
        <taxon>Gammaproteobacteria</taxon>
        <taxon>Enterobacterales</taxon>
        <taxon>Erwiniaceae</taxon>
        <taxon>Buchnera</taxon>
    </lineage>
</organism>
<keyword id="KW-0235">DNA replication</keyword>
<keyword id="KW-0238">DNA-binding</keyword>
<keyword id="KW-0639">Primosome</keyword>
<gene>
    <name evidence="1" type="primary">dnaT</name>
    <name type="ordered locus">BUsg_023</name>
</gene>
<comment type="function">
    <text evidence="1">Involved in the restart of stalled replication forks, which reloads the replicative helicase on sites other than the origin of replication. Can function in multiple replication restart pathways. Displaces ssDNA from a PriB-ssDNA complex. Probably forms a spiral filament on ssDNA.</text>
</comment>
<comment type="subunit">
    <text evidence="1">Homooligomerizes. Interacts with PriB. Component of the replication restart primosome. Primosome assembly occurs via a 'hand-off' mechanism. PriA binds to replication forks, subsequently PriB then DnaT bind; DnaT then displaces ssDNA to generate the helicase loading substrate.</text>
</comment>
<comment type="similarity">
    <text evidence="1">Belongs to the DnaT family.</text>
</comment>
<sequence length="166" mass="19665">MKILVSKKITLDLFCKNPIQIIEKEKNEIISISKNKKTVFYVIQPKALKKLFDIKEYFVKSKITKKEKKIIEKFPMHTNWIPDKDFIQKAALWGISLNEEVSKYELASFISYWEAEGLFFHHIQWQQKLARSLERSRSMNNAIQQKKDITYIPVPDQKTPDGFRGK</sequence>
<protein>
    <recommendedName>
        <fullName evidence="1">Replication restart protein DnaT</fullName>
    </recommendedName>
</protein>
<evidence type="ECO:0000255" key="1">
    <source>
        <dbReference type="HAMAP-Rule" id="MF_01061"/>
    </source>
</evidence>
<name>DNAT_BUCAP</name>
<accession>Q8KA78</accession>
<dbReference type="EMBL" id="AE013218">
    <property type="protein sequence ID" value="AAM67595.1"/>
    <property type="molecule type" value="Genomic_DNA"/>
</dbReference>
<dbReference type="RefSeq" id="WP_011053561.1">
    <property type="nucleotide sequence ID" value="NC_004061.1"/>
</dbReference>
<dbReference type="SMR" id="Q8KA78"/>
<dbReference type="STRING" id="198804.BUsg_023"/>
<dbReference type="GeneID" id="93003486"/>
<dbReference type="KEGG" id="bas:BUsg_023"/>
<dbReference type="eggNOG" id="ENOG502Z8PW">
    <property type="taxonomic scope" value="Bacteria"/>
</dbReference>
<dbReference type="HOGENOM" id="CLU_1501592_0_0_6"/>
<dbReference type="Proteomes" id="UP000000416">
    <property type="component" value="Chromosome"/>
</dbReference>
<dbReference type="GO" id="GO:1990077">
    <property type="term" value="C:primosome complex"/>
    <property type="evidence" value="ECO:0007669"/>
    <property type="project" value="UniProtKB-KW"/>
</dbReference>
<dbReference type="GO" id="GO:0006269">
    <property type="term" value="P:DNA replication, synthesis of primer"/>
    <property type="evidence" value="ECO:0007669"/>
    <property type="project" value="UniProtKB-UniRule"/>
</dbReference>
<dbReference type="Gene3D" id="1.10.8.1180">
    <property type="match status" value="1"/>
</dbReference>
<dbReference type="HAMAP" id="MF_01061">
    <property type="entry name" value="DnaT"/>
    <property type="match status" value="1"/>
</dbReference>
<dbReference type="InterPro" id="IPR020917">
    <property type="entry name" value="DnaT"/>
</dbReference>
<dbReference type="InterPro" id="IPR040480">
    <property type="entry name" value="DnaT_DNA_bind"/>
</dbReference>
<dbReference type="NCBIfam" id="NF002770">
    <property type="entry name" value="PRK02854.1"/>
    <property type="match status" value="1"/>
</dbReference>
<dbReference type="Pfam" id="PF17948">
    <property type="entry name" value="DnaT"/>
    <property type="match status" value="1"/>
</dbReference>
<feature type="chain" id="PRO_0000199868" description="Replication restart protein DnaT">
    <location>
        <begin position="1"/>
        <end position="166"/>
    </location>
</feature>